<comment type="function">
    <text>Potential transporter for phosphate.</text>
</comment>
<comment type="subcellular location">
    <subcellularLocation>
        <location evidence="2">Cell membrane</location>
        <topology evidence="2">Multi-pass membrane protein</topology>
    </subcellularLocation>
</comment>
<comment type="similarity">
    <text evidence="2">Belongs to the inorganic phosphate transporter (PiT) (TC 2.A.20) family.</text>
</comment>
<protein>
    <recommendedName>
        <fullName>Putative phosphate permease TK2061</fullName>
    </recommendedName>
</protein>
<reference key="1">
    <citation type="journal article" date="2005" name="Genome Res.">
        <title>Complete genome sequence of the hyperthermophilic archaeon Thermococcus kodakaraensis KOD1 and comparison with Pyrococcus genomes.</title>
        <authorList>
            <person name="Fukui T."/>
            <person name="Atomi H."/>
            <person name="Kanai T."/>
            <person name="Matsumi R."/>
            <person name="Fujiwara S."/>
            <person name="Imanaka T."/>
        </authorList>
    </citation>
    <scope>NUCLEOTIDE SEQUENCE [LARGE SCALE GENOMIC DNA]</scope>
    <source>
        <strain>ATCC BAA-918 / JCM 12380 / KOD1</strain>
    </source>
</reference>
<gene>
    <name type="ordered locus">TK2061</name>
</gene>
<evidence type="ECO:0000255" key="1"/>
<evidence type="ECO:0000305" key="2"/>
<organism>
    <name type="scientific">Thermococcus kodakarensis (strain ATCC BAA-918 / JCM 12380 / KOD1)</name>
    <name type="common">Pyrococcus kodakaraensis (strain KOD1)</name>
    <dbReference type="NCBI Taxonomy" id="69014"/>
    <lineage>
        <taxon>Archaea</taxon>
        <taxon>Methanobacteriati</taxon>
        <taxon>Methanobacteriota</taxon>
        <taxon>Thermococci</taxon>
        <taxon>Thermococcales</taxon>
        <taxon>Thermococcaceae</taxon>
        <taxon>Thermococcus</taxon>
    </lineage>
</organism>
<accession>Q5JHX4</accession>
<sequence>MAVMDPWLLITIIVGFGMAWAIGANDAANSMSTAVGAKAITPKQAVLIAGVLEFTGAYFFGKSVTETIRKGILYPDRITDPTVLIYGSVAALLAATIWLVIATKFGLPVSTTHSIIGGIVGYGIVYAGFSIVNWGKMTQVVLSWILSPIIGAIMAFLVFKALTKSIFERKDPVRSSKIWSPFWIGLAFVVIGTMFYIKVLHGKSLKTGVLFYGIPAGLVVFLILFLTLRVKFPSSDPFIGVESIFRRVQVITSGYVALAHGANDVANAIGPVAAVYAVATMGMAGMKVPVPRWILAMGGLGIAIGVATYGYRVMETVGKKITELTNTRGFTIDFSAATVVLVASWLGLPISTTHVVVGAVIGVGLARGVKAINKDIVRDIIISWFVTVPVAALISAFLFKILMIVG</sequence>
<dbReference type="EMBL" id="AP006878">
    <property type="protein sequence ID" value="BAD86250.1"/>
    <property type="molecule type" value="Genomic_DNA"/>
</dbReference>
<dbReference type="SMR" id="Q5JHX4"/>
<dbReference type="FunCoup" id="Q5JHX4">
    <property type="interactions" value="46"/>
</dbReference>
<dbReference type="STRING" id="69014.TK2061"/>
<dbReference type="EnsemblBacteria" id="BAD86250">
    <property type="protein sequence ID" value="BAD86250"/>
    <property type="gene ID" value="TK2061"/>
</dbReference>
<dbReference type="KEGG" id="tko:TK2061"/>
<dbReference type="PATRIC" id="fig|69014.16.peg.2016"/>
<dbReference type="eggNOG" id="arCOG02267">
    <property type="taxonomic scope" value="Archaea"/>
</dbReference>
<dbReference type="HOGENOM" id="CLU_015355_3_3_2"/>
<dbReference type="InParanoid" id="Q5JHX4"/>
<dbReference type="PhylomeDB" id="Q5JHX4"/>
<dbReference type="Proteomes" id="UP000000536">
    <property type="component" value="Chromosome"/>
</dbReference>
<dbReference type="GO" id="GO:0005886">
    <property type="term" value="C:plasma membrane"/>
    <property type="evidence" value="ECO:0007669"/>
    <property type="project" value="UniProtKB-SubCell"/>
</dbReference>
<dbReference type="GO" id="GO:0005315">
    <property type="term" value="F:phosphate transmembrane transporter activity"/>
    <property type="evidence" value="ECO:0000318"/>
    <property type="project" value="GO_Central"/>
</dbReference>
<dbReference type="GO" id="GO:0035435">
    <property type="term" value="P:phosphate ion transmembrane transport"/>
    <property type="evidence" value="ECO:0000318"/>
    <property type="project" value="GO_Central"/>
</dbReference>
<dbReference type="InterPro" id="IPR001204">
    <property type="entry name" value="Phos_transporter"/>
</dbReference>
<dbReference type="PANTHER" id="PTHR11101">
    <property type="entry name" value="PHOSPHATE TRANSPORTER"/>
    <property type="match status" value="1"/>
</dbReference>
<dbReference type="PANTHER" id="PTHR11101:SF80">
    <property type="entry name" value="PHOSPHATE TRANSPORTER"/>
    <property type="match status" value="1"/>
</dbReference>
<dbReference type="Pfam" id="PF01384">
    <property type="entry name" value="PHO4"/>
    <property type="match status" value="1"/>
</dbReference>
<keyword id="KW-1003">Cell membrane</keyword>
<keyword id="KW-0472">Membrane</keyword>
<keyword id="KW-0592">Phosphate transport</keyword>
<keyword id="KW-1185">Reference proteome</keyword>
<keyword id="KW-0812">Transmembrane</keyword>
<keyword id="KW-1133">Transmembrane helix</keyword>
<keyword id="KW-0813">Transport</keyword>
<proteinExistence type="inferred from homology"/>
<name>Y2061_THEKO</name>
<feature type="chain" id="PRO_0000080808" description="Putative phosphate permease TK2061">
    <location>
        <begin position="1"/>
        <end position="406"/>
    </location>
</feature>
<feature type="transmembrane region" description="Helical" evidence="1">
    <location>
        <begin position="2"/>
        <end position="22"/>
    </location>
</feature>
<feature type="transmembrane region" description="Helical" evidence="1">
    <location>
        <begin position="45"/>
        <end position="65"/>
    </location>
</feature>
<feature type="transmembrane region" description="Helical" evidence="1">
    <location>
        <begin position="82"/>
        <end position="102"/>
    </location>
</feature>
<feature type="transmembrane region" description="Helical" evidence="1">
    <location>
        <begin position="115"/>
        <end position="135"/>
    </location>
</feature>
<feature type="transmembrane region" description="Helical" evidence="1">
    <location>
        <begin position="139"/>
        <end position="159"/>
    </location>
</feature>
<feature type="transmembrane region" description="Helical" evidence="1">
    <location>
        <begin position="182"/>
        <end position="202"/>
    </location>
</feature>
<feature type="transmembrane region" description="Helical" evidence="1">
    <location>
        <begin position="208"/>
        <end position="228"/>
    </location>
</feature>
<feature type="transmembrane region" description="Helical" evidence="1">
    <location>
        <begin position="288"/>
        <end position="308"/>
    </location>
</feature>
<feature type="transmembrane region" description="Helical" evidence="1">
    <location>
        <begin position="324"/>
        <end position="346"/>
    </location>
</feature>
<feature type="transmembrane region" description="Helical" evidence="1">
    <location>
        <begin position="385"/>
        <end position="405"/>
    </location>
</feature>